<keyword id="KW-0119">Carbohydrate metabolism</keyword>
<keyword id="KW-0413">Isomerase</keyword>
<keyword id="KW-0479">Metal-binding</keyword>
<keyword id="KW-0862">Zinc</keyword>
<protein>
    <recommendedName>
        <fullName evidence="1">L-ribulose-5-phosphate 4-epimerase UlaF</fullName>
        <ecNumber evidence="1">5.1.3.4</ecNumber>
    </recommendedName>
    <alternativeName>
        <fullName evidence="1">L-ascorbate utilization protein F</fullName>
    </alternativeName>
    <alternativeName>
        <fullName evidence="1">Phosphoribulose isomerase</fullName>
    </alternativeName>
</protein>
<feature type="chain" id="PRO_0000233244" description="L-ribulose-5-phosphate 4-epimerase UlaF">
    <location>
        <begin position="1"/>
        <end position="228"/>
    </location>
</feature>
<feature type="active site" description="Proton donor/acceptor" evidence="1">
    <location>
        <position position="118"/>
    </location>
</feature>
<feature type="active site" description="Proton donor/acceptor" evidence="1">
    <location>
        <position position="225"/>
    </location>
</feature>
<feature type="binding site" evidence="1">
    <location>
        <begin position="26"/>
        <end position="27"/>
    </location>
    <ligand>
        <name>substrate</name>
    </ligand>
</feature>
<feature type="binding site" evidence="1">
    <location>
        <begin position="43"/>
        <end position="44"/>
    </location>
    <ligand>
        <name>substrate</name>
    </ligand>
</feature>
<feature type="binding site" evidence="1">
    <location>
        <begin position="72"/>
        <end position="73"/>
    </location>
    <ligand>
        <name>substrate</name>
    </ligand>
</feature>
<feature type="binding site" evidence="1">
    <location>
        <position position="74"/>
    </location>
    <ligand>
        <name>Zn(2+)</name>
        <dbReference type="ChEBI" id="CHEBI:29105"/>
    </ligand>
</feature>
<feature type="binding site" evidence="1">
    <location>
        <position position="93"/>
    </location>
    <ligand>
        <name>Zn(2+)</name>
        <dbReference type="ChEBI" id="CHEBI:29105"/>
    </ligand>
</feature>
<feature type="binding site" evidence="1">
    <location>
        <position position="95"/>
    </location>
    <ligand>
        <name>Zn(2+)</name>
        <dbReference type="ChEBI" id="CHEBI:29105"/>
    </ligand>
</feature>
<feature type="binding site" evidence="1">
    <location>
        <position position="167"/>
    </location>
    <ligand>
        <name>Zn(2+)</name>
        <dbReference type="ChEBI" id="CHEBI:29105"/>
    </ligand>
</feature>
<evidence type="ECO:0000255" key="1">
    <source>
        <dbReference type="HAMAP-Rule" id="MF_01952"/>
    </source>
</evidence>
<gene>
    <name evidence="1" type="primary">ulaF</name>
    <name type="ordered locus">SCH_4262</name>
</gene>
<proteinExistence type="inferred from homology"/>
<dbReference type="EC" id="5.1.3.4" evidence="1"/>
<dbReference type="EMBL" id="AE017220">
    <property type="protein sequence ID" value="AAX68168.1"/>
    <property type="molecule type" value="Genomic_DNA"/>
</dbReference>
<dbReference type="RefSeq" id="WP_001170767.1">
    <property type="nucleotide sequence ID" value="NC_006905.1"/>
</dbReference>
<dbReference type="SMR" id="Q57GJ4"/>
<dbReference type="KEGG" id="sec:SCH_4262"/>
<dbReference type="HOGENOM" id="CLU_006033_5_0_6"/>
<dbReference type="UniPathway" id="UPA00263">
    <property type="reaction ID" value="UER00380"/>
</dbReference>
<dbReference type="Proteomes" id="UP000000538">
    <property type="component" value="Chromosome"/>
</dbReference>
<dbReference type="GO" id="GO:0005829">
    <property type="term" value="C:cytosol"/>
    <property type="evidence" value="ECO:0007669"/>
    <property type="project" value="TreeGrafter"/>
</dbReference>
<dbReference type="GO" id="GO:0016832">
    <property type="term" value="F:aldehyde-lyase activity"/>
    <property type="evidence" value="ECO:0007669"/>
    <property type="project" value="TreeGrafter"/>
</dbReference>
<dbReference type="GO" id="GO:0008742">
    <property type="term" value="F:L-ribulose-phosphate 4-epimerase activity"/>
    <property type="evidence" value="ECO:0007669"/>
    <property type="project" value="UniProtKB-UniRule"/>
</dbReference>
<dbReference type="GO" id="GO:0008270">
    <property type="term" value="F:zinc ion binding"/>
    <property type="evidence" value="ECO:0007669"/>
    <property type="project" value="UniProtKB-UniRule"/>
</dbReference>
<dbReference type="GO" id="GO:0019854">
    <property type="term" value="P:L-ascorbic acid catabolic process"/>
    <property type="evidence" value="ECO:0007669"/>
    <property type="project" value="UniProtKB-UniRule"/>
</dbReference>
<dbReference type="GO" id="GO:0019323">
    <property type="term" value="P:pentose catabolic process"/>
    <property type="evidence" value="ECO:0007669"/>
    <property type="project" value="TreeGrafter"/>
</dbReference>
<dbReference type="CDD" id="cd00398">
    <property type="entry name" value="Aldolase_II"/>
    <property type="match status" value="1"/>
</dbReference>
<dbReference type="FunFam" id="3.40.225.10:FF:000001">
    <property type="entry name" value="L-ribulose-5-phosphate 4-epimerase UlaF"/>
    <property type="match status" value="1"/>
</dbReference>
<dbReference type="Gene3D" id="3.40.225.10">
    <property type="entry name" value="Class II aldolase/adducin N-terminal domain"/>
    <property type="match status" value="1"/>
</dbReference>
<dbReference type="HAMAP" id="MF_01952">
    <property type="entry name" value="UlaF"/>
    <property type="match status" value="1"/>
</dbReference>
<dbReference type="InterPro" id="IPR050197">
    <property type="entry name" value="Aldolase_class_II_sugar_metab"/>
</dbReference>
<dbReference type="InterPro" id="IPR001303">
    <property type="entry name" value="Aldolase_II/adducin_N"/>
</dbReference>
<dbReference type="InterPro" id="IPR036409">
    <property type="entry name" value="Aldolase_II/adducin_N_sf"/>
</dbReference>
<dbReference type="InterPro" id="IPR023499">
    <property type="entry name" value="UlaF"/>
</dbReference>
<dbReference type="NCBIfam" id="NF006047">
    <property type="entry name" value="PRK08193.1"/>
    <property type="match status" value="1"/>
</dbReference>
<dbReference type="NCBIfam" id="NF009003">
    <property type="entry name" value="PRK12348.1"/>
    <property type="match status" value="1"/>
</dbReference>
<dbReference type="PANTHER" id="PTHR22789">
    <property type="entry name" value="FUCULOSE PHOSPHATE ALDOLASE"/>
    <property type="match status" value="1"/>
</dbReference>
<dbReference type="PANTHER" id="PTHR22789:SF9">
    <property type="entry name" value="L-RIBULOSE-5-PHOSPHATE 4-EPIMERASE ULAF"/>
    <property type="match status" value="1"/>
</dbReference>
<dbReference type="Pfam" id="PF00596">
    <property type="entry name" value="Aldolase_II"/>
    <property type="match status" value="1"/>
</dbReference>
<dbReference type="SMART" id="SM01007">
    <property type="entry name" value="Aldolase_II"/>
    <property type="match status" value="1"/>
</dbReference>
<dbReference type="SUPFAM" id="SSF53639">
    <property type="entry name" value="AraD/HMP-PK domain-like"/>
    <property type="match status" value="1"/>
</dbReference>
<comment type="function">
    <text evidence="1">Catalyzes the isomerization of L-ribulose 5-phosphate to D-xylulose 5-phosphate. Is involved in the anaerobic L-ascorbate utilization.</text>
</comment>
<comment type="catalytic activity">
    <reaction evidence="1">
        <text>L-ribulose 5-phosphate = D-xylulose 5-phosphate</text>
        <dbReference type="Rhea" id="RHEA:22368"/>
        <dbReference type="ChEBI" id="CHEBI:57737"/>
        <dbReference type="ChEBI" id="CHEBI:58226"/>
        <dbReference type="EC" id="5.1.3.4"/>
    </reaction>
</comment>
<comment type="cofactor">
    <cofactor evidence="1">
        <name>Zn(2+)</name>
        <dbReference type="ChEBI" id="CHEBI:29105"/>
    </cofactor>
    <text evidence="1">Binds 1 zinc ion per subunit.</text>
</comment>
<comment type="pathway">
    <text evidence="1">Cofactor degradation; L-ascorbate degradation; D-xylulose 5-phosphate from L-ascorbate: step 4/4.</text>
</comment>
<comment type="induction">
    <text evidence="1">Induced by L-ascorbate. Repressed by UlaR.</text>
</comment>
<comment type="similarity">
    <text evidence="1">Belongs to the aldolase class II family. AraD/FucA subfamily.</text>
</comment>
<reference key="1">
    <citation type="journal article" date="2005" name="Nucleic Acids Res.">
        <title>The genome sequence of Salmonella enterica serovar Choleraesuis, a highly invasive and resistant zoonotic pathogen.</title>
        <authorList>
            <person name="Chiu C.-H."/>
            <person name="Tang P."/>
            <person name="Chu C."/>
            <person name="Hu S."/>
            <person name="Bao Q."/>
            <person name="Yu J."/>
            <person name="Chou Y.-Y."/>
            <person name="Wang H.-S."/>
            <person name="Lee Y.-S."/>
        </authorList>
    </citation>
    <scope>NUCLEOTIDE SEQUENCE [LARGE SCALE GENOMIC DNA]</scope>
    <source>
        <strain>SC-B67</strain>
    </source>
</reference>
<sequence>MQKLKQQVFDANMDLPRYGLVTFTWGNVSAIDRERGLVVIKPSGVAYETMKVDDMVVVDMDGKVVEGGYRPSSDTATHLALYQRYPSLGGVVHTHSTHATAWAQAGMAIPALGTTHADYFFGDIPCTRALSEEEVQGEYELNTGKVIIETLGEVEPLHTPGIVVYQHGPFAWGKDAHDAVHNAVVMEEVAKMAWIARGINPALNPIDDYLMNKHFMRKHGPNAYYGQK</sequence>
<organism>
    <name type="scientific">Salmonella choleraesuis (strain SC-B67)</name>
    <dbReference type="NCBI Taxonomy" id="321314"/>
    <lineage>
        <taxon>Bacteria</taxon>
        <taxon>Pseudomonadati</taxon>
        <taxon>Pseudomonadota</taxon>
        <taxon>Gammaproteobacteria</taxon>
        <taxon>Enterobacterales</taxon>
        <taxon>Enterobacteriaceae</taxon>
        <taxon>Salmonella</taxon>
    </lineage>
</organism>
<name>ULAF_SALCH</name>
<accession>Q57GJ4</accession>